<sequence length="71" mass="7968">MWSDSLVSRICVPIIVVCTSIALLNVVSFRSECSCVVHISGAAIDIRGCSFTPDFIEYAKTLRVFNHRYQE</sequence>
<protein>
    <recommendedName>
        <fullName>Movement protein TGBp3</fullName>
    </recommendedName>
    <alternativeName>
        <fullName>7 kDa protein</fullName>
    </alternativeName>
    <alternativeName>
        <fullName>Triple gene block 3 protein</fullName>
        <shortName>TGBp3</shortName>
    </alternativeName>
</protein>
<dbReference type="EMBL" id="X65102">
    <property type="protein sequence ID" value="CAH55776.1"/>
    <property type="molecule type" value="Genomic_RNA"/>
</dbReference>
<dbReference type="SMR" id="Q02122"/>
<dbReference type="GO" id="GO:0044167">
    <property type="term" value="C:host cell endoplasmic reticulum membrane"/>
    <property type="evidence" value="ECO:0007669"/>
    <property type="project" value="UniProtKB-SubCell"/>
</dbReference>
<dbReference type="GO" id="GO:0016020">
    <property type="term" value="C:membrane"/>
    <property type="evidence" value="ECO:0007669"/>
    <property type="project" value="UniProtKB-KW"/>
</dbReference>
<dbReference type="GO" id="GO:0046740">
    <property type="term" value="P:transport of virus in host, cell to cell"/>
    <property type="evidence" value="ECO:0007669"/>
    <property type="project" value="UniProtKB-KW"/>
</dbReference>
<dbReference type="InterPro" id="IPR003411">
    <property type="entry name" value="TGBp3"/>
</dbReference>
<dbReference type="Pfam" id="PF02495">
    <property type="entry name" value="TGBp3"/>
    <property type="match status" value="1"/>
</dbReference>
<accession>Q02122</accession>
<accession>Q629I7</accession>
<comment type="function">
    <text evidence="1">Plays a role in viral cell-to-cell propagation, by facilitating genome transport to neighboring plant cells through plasmosdesmata. May induce the formation of granular vesicles derived from the Endoplasmic reticulum, which align on actin filaments (By similarity).</text>
</comment>
<comment type="subcellular location">
    <subcellularLocation>
        <location evidence="1">Host endoplasmic reticulum membrane</location>
    </subcellularLocation>
</comment>
<comment type="miscellaneous">
    <text>TGBp1, TGBp2 and TGBp3 seem to act together for cell-to-cell propagation. TGBp1 is the main movement protein that physically cross the plasmodesma with the viral genome. TGBp2 and TGBp3 would facilitate TGBp1 function.</text>
</comment>
<comment type="similarity">
    <text evidence="3">Belongs to the Tymovirales TGBp3 protein family.</text>
</comment>
<keyword id="KW-1038">Host endoplasmic reticulum</keyword>
<keyword id="KW-1043">Host membrane</keyword>
<keyword id="KW-0472">Membrane</keyword>
<keyword id="KW-0812">Transmembrane</keyword>
<keyword id="KW-1133">Transmembrane helix</keyword>
<keyword id="KW-0813">Transport</keyword>
<keyword id="KW-0916">Viral movement protein</keyword>
<feature type="chain" id="PRO_0000222615" description="Movement protein TGBp3">
    <location>
        <begin position="1"/>
        <end position="71"/>
    </location>
</feature>
<feature type="topological domain" description="Lumenal" evidence="2">
    <location>
        <begin position="1"/>
        <end position="4"/>
    </location>
</feature>
<feature type="transmembrane region" description="Helical" evidence="2">
    <location>
        <begin position="5"/>
        <end position="27"/>
    </location>
</feature>
<feature type="topological domain" description="Cytoplasmic" evidence="2">
    <location>
        <begin position="28"/>
        <end position="71"/>
    </location>
</feature>
<organismHost>
    <name type="scientific">Populus balsamifera</name>
    <name type="common">Balsam poplar</name>
    <dbReference type="NCBI Taxonomy" id="73824"/>
</organismHost>
<organismHost>
    <name type="scientific">Populus deltoides</name>
    <name type="common">Eastern poplar</name>
    <name type="synonym">Eastern cottonwood</name>
    <dbReference type="NCBI Taxonomy" id="3696"/>
</organismHost>
<organismHost>
    <name type="scientific">Populus maximowiczii</name>
    <name type="common">Japanese poplar</name>
    <dbReference type="NCBI Taxonomy" id="75703"/>
</organismHost>
<organismHost>
    <name type="scientific">Populus nigra</name>
    <name type="common">Lombardy poplar</name>
    <dbReference type="NCBI Taxonomy" id="3691"/>
</organismHost>
<organismHost>
    <name type="scientific">Populus trichocarpa</name>
    <name type="common">Western balsam poplar</name>
    <name type="synonym">Populus balsamifera subsp. trichocarpa</name>
    <dbReference type="NCBI Taxonomy" id="3694"/>
</organismHost>
<proteinExistence type="inferred from homology"/>
<organism>
    <name type="scientific">Poplar mosaic virus (isolate ATCC Pv275)</name>
    <name type="common">PMV</name>
    <dbReference type="NCBI Taxonomy" id="31709"/>
    <lineage>
        <taxon>Viruses</taxon>
        <taxon>Riboviria</taxon>
        <taxon>Orthornavirae</taxon>
        <taxon>Kitrinoviricota</taxon>
        <taxon>Alsuviricetes</taxon>
        <taxon>Tymovirales</taxon>
        <taxon>Betaflexiviridae</taxon>
        <taxon>Quinvirinae</taxon>
        <taxon>Carlavirus</taxon>
        <taxon>Poplar mosaic virus</taxon>
    </lineage>
</organism>
<gene>
    <name type="ORF">ORF4</name>
</gene>
<evidence type="ECO:0000250" key="1"/>
<evidence type="ECO:0000255" key="2"/>
<evidence type="ECO:0000305" key="3"/>
<reference key="1">
    <citation type="journal article" date="1992" name="J. Gen. Virol.">
        <title>Partial nucleotide sequence of poplar mosaic virus RNA confirms its classification as a carlavirus.</title>
        <authorList>
            <person name="Henderson J."/>
            <person name="Gibbs M.J."/>
            <person name="Edwards M.-L."/>
            <person name="Clarke V.A."/>
            <person name="Gardner K.A."/>
            <person name="Cooper J.I."/>
        </authorList>
    </citation>
    <scope>NUCLEOTIDE SEQUENCE [GENOMIC RNA]</scope>
</reference>
<reference key="2">
    <citation type="journal article" date="2005" name="J. Virol. Methods">
        <title>Construction and properties of a gene-silencing vector based on Poplar mosaic virus (genus Carlavirus).</title>
        <authorList>
            <person name="Naylor M."/>
            <person name="Reeves J."/>
            <person name="Cooper J.I."/>
            <person name="Edwards M.-L."/>
            <person name="Wang H."/>
        </authorList>
    </citation>
    <scope>SEQUENCE REVISION</scope>
</reference>
<name>TGB3_POPMV</name>